<accession>A5G6I6</accession>
<name>HIS3_GEOUR</name>
<feature type="chain" id="PRO_1000084180" description="Phosphoribosyl-AMP cyclohydrolase">
    <location>
        <begin position="1"/>
        <end position="125"/>
    </location>
</feature>
<feature type="binding site" evidence="1">
    <location>
        <position position="74"/>
    </location>
    <ligand>
        <name>Mg(2+)</name>
        <dbReference type="ChEBI" id="CHEBI:18420"/>
    </ligand>
</feature>
<feature type="binding site" evidence="1">
    <location>
        <position position="75"/>
    </location>
    <ligand>
        <name>Zn(2+)</name>
        <dbReference type="ChEBI" id="CHEBI:29105"/>
        <note>ligand shared between dimeric partners</note>
    </ligand>
</feature>
<feature type="binding site" evidence="1">
    <location>
        <position position="76"/>
    </location>
    <ligand>
        <name>Mg(2+)</name>
        <dbReference type="ChEBI" id="CHEBI:18420"/>
    </ligand>
</feature>
<feature type="binding site" evidence="1">
    <location>
        <position position="78"/>
    </location>
    <ligand>
        <name>Mg(2+)</name>
        <dbReference type="ChEBI" id="CHEBI:18420"/>
    </ligand>
</feature>
<feature type="binding site" evidence="1">
    <location>
        <position position="92"/>
    </location>
    <ligand>
        <name>Zn(2+)</name>
        <dbReference type="ChEBI" id="CHEBI:29105"/>
        <note>ligand shared between dimeric partners</note>
    </ligand>
</feature>
<feature type="binding site" evidence="1">
    <location>
        <position position="99"/>
    </location>
    <ligand>
        <name>Zn(2+)</name>
        <dbReference type="ChEBI" id="CHEBI:29105"/>
        <note>ligand shared between dimeric partners</note>
    </ligand>
</feature>
<keyword id="KW-0028">Amino-acid biosynthesis</keyword>
<keyword id="KW-0963">Cytoplasm</keyword>
<keyword id="KW-0368">Histidine biosynthesis</keyword>
<keyword id="KW-0378">Hydrolase</keyword>
<keyword id="KW-0460">Magnesium</keyword>
<keyword id="KW-0479">Metal-binding</keyword>
<keyword id="KW-1185">Reference proteome</keyword>
<keyword id="KW-0862">Zinc</keyword>
<reference key="1">
    <citation type="submission" date="2007-05" db="EMBL/GenBank/DDBJ databases">
        <title>Complete sequence of Geobacter uraniireducens Rf4.</title>
        <authorList>
            <consortium name="US DOE Joint Genome Institute"/>
            <person name="Copeland A."/>
            <person name="Lucas S."/>
            <person name="Lapidus A."/>
            <person name="Barry K."/>
            <person name="Detter J.C."/>
            <person name="Glavina del Rio T."/>
            <person name="Hammon N."/>
            <person name="Israni S."/>
            <person name="Dalin E."/>
            <person name="Tice H."/>
            <person name="Pitluck S."/>
            <person name="Chertkov O."/>
            <person name="Brettin T."/>
            <person name="Bruce D."/>
            <person name="Han C."/>
            <person name="Schmutz J."/>
            <person name="Larimer F."/>
            <person name="Land M."/>
            <person name="Hauser L."/>
            <person name="Kyrpides N."/>
            <person name="Mikhailova N."/>
            <person name="Shelobolina E."/>
            <person name="Aklujkar M."/>
            <person name="Lovley D."/>
            <person name="Richardson P."/>
        </authorList>
    </citation>
    <scope>NUCLEOTIDE SEQUENCE [LARGE SCALE GENOMIC DNA]</scope>
    <source>
        <strain>ATCC BAA-1134 / JCM 13001 / Rf4</strain>
    </source>
</reference>
<sequence length="125" mass="14351">MIKLDFEKMGGLIPAVIQDHESGEVLMVAFMDEKTLNLTLETGKTWFFSRTRNKYWMKGEESGNTQEVKEVLTDCDADTVVIKVKQNGPAACHTGNRSCFYVKWENGEWVEHSNPLFDPNEVYKK</sequence>
<proteinExistence type="inferred from homology"/>
<dbReference type="EC" id="3.5.4.19" evidence="1"/>
<dbReference type="EMBL" id="CP000698">
    <property type="protein sequence ID" value="ABQ27404.1"/>
    <property type="molecule type" value="Genomic_DNA"/>
</dbReference>
<dbReference type="RefSeq" id="WP_011940067.1">
    <property type="nucleotide sequence ID" value="NC_009483.1"/>
</dbReference>
<dbReference type="SMR" id="A5G6I6"/>
<dbReference type="STRING" id="351605.Gura_3243"/>
<dbReference type="KEGG" id="gur:Gura_3243"/>
<dbReference type="HOGENOM" id="CLU_048577_5_0_7"/>
<dbReference type="OrthoDB" id="9795769at2"/>
<dbReference type="UniPathway" id="UPA00031">
    <property type="reaction ID" value="UER00008"/>
</dbReference>
<dbReference type="Proteomes" id="UP000006695">
    <property type="component" value="Chromosome"/>
</dbReference>
<dbReference type="GO" id="GO:0005737">
    <property type="term" value="C:cytoplasm"/>
    <property type="evidence" value="ECO:0007669"/>
    <property type="project" value="UniProtKB-SubCell"/>
</dbReference>
<dbReference type="GO" id="GO:0000287">
    <property type="term" value="F:magnesium ion binding"/>
    <property type="evidence" value="ECO:0007669"/>
    <property type="project" value="UniProtKB-UniRule"/>
</dbReference>
<dbReference type="GO" id="GO:0004635">
    <property type="term" value="F:phosphoribosyl-AMP cyclohydrolase activity"/>
    <property type="evidence" value="ECO:0007669"/>
    <property type="project" value="UniProtKB-UniRule"/>
</dbReference>
<dbReference type="GO" id="GO:0008270">
    <property type="term" value="F:zinc ion binding"/>
    <property type="evidence" value="ECO:0007669"/>
    <property type="project" value="UniProtKB-UniRule"/>
</dbReference>
<dbReference type="GO" id="GO:0000105">
    <property type="term" value="P:L-histidine biosynthetic process"/>
    <property type="evidence" value="ECO:0007669"/>
    <property type="project" value="UniProtKB-UniRule"/>
</dbReference>
<dbReference type="FunFam" id="3.10.20.810:FF:000001">
    <property type="entry name" value="Histidine biosynthesis bifunctional protein HisIE"/>
    <property type="match status" value="1"/>
</dbReference>
<dbReference type="Gene3D" id="3.10.20.810">
    <property type="entry name" value="Phosphoribosyl-AMP cyclohydrolase"/>
    <property type="match status" value="1"/>
</dbReference>
<dbReference type="HAMAP" id="MF_01021">
    <property type="entry name" value="HisI"/>
    <property type="match status" value="1"/>
</dbReference>
<dbReference type="InterPro" id="IPR026660">
    <property type="entry name" value="PRA-CH"/>
</dbReference>
<dbReference type="InterPro" id="IPR002496">
    <property type="entry name" value="PRib_AMP_CycHydrolase_dom"/>
</dbReference>
<dbReference type="InterPro" id="IPR038019">
    <property type="entry name" value="PRib_AMP_CycHydrolase_sf"/>
</dbReference>
<dbReference type="NCBIfam" id="NF000768">
    <property type="entry name" value="PRK00051.1"/>
    <property type="match status" value="1"/>
</dbReference>
<dbReference type="PANTHER" id="PTHR42945">
    <property type="entry name" value="HISTIDINE BIOSYNTHESIS BIFUNCTIONAL PROTEIN"/>
    <property type="match status" value="1"/>
</dbReference>
<dbReference type="PANTHER" id="PTHR42945:SF1">
    <property type="entry name" value="HISTIDINE BIOSYNTHESIS BIFUNCTIONAL PROTEIN HIS7"/>
    <property type="match status" value="1"/>
</dbReference>
<dbReference type="Pfam" id="PF01502">
    <property type="entry name" value="PRA-CH"/>
    <property type="match status" value="1"/>
</dbReference>
<dbReference type="SUPFAM" id="SSF141734">
    <property type="entry name" value="HisI-like"/>
    <property type="match status" value="1"/>
</dbReference>
<comment type="function">
    <text evidence="1">Catalyzes the hydrolysis of the adenine ring of phosphoribosyl-AMP.</text>
</comment>
<comment type="catalytic activity">
    <reaction evidence="1">
        <text>1-(5-phospho-beta-D-ribosyl)-5'-AMP + H2O = 1-(5-phospho-beta-D-ribosyl)-5-[(5-phospho-beta-D-ribosylamino)methylideneamino]imidazole-4-carboxamide</text>
        <dbReference type="Rhea" id="RHEA:20049"/>
        <dbReference type="ChEBI" id="CHEBI:15377"/>
        <dbReference type="ChEBI" id="CHEBI:58435"/>
        <dbReference type="ChEBI" id="CHEBI:59457"/>
        <dbReference type="EC" id="3.5.4.19"/>
    </reaction>
</comment>
<comment type="cofactor">
    <cofactor evidence="1">
        <name>Mg(2+)</name>
        <dbReference type="ChEBI" id="CHEBI:18420"/>
    </cofactor>
    <text evidence="1">Binds 1 Mg(2+) ion per subunit.</text>
</comment>
<comment type="cofactor">
    <cofactor evidence="1">
        <name>Zn(2+)</name>
        <dbReference type="ChEBI" id="CHEBI:29105"/>
    </cofactor>
    <text evidence="1">Binds 1 zinc ion per subunit.</text>
</comment>
<comment type="pathway">
    <text evidence="1">Amino-acid biosynthesis; L-histidine biosynthesis; L-histidine from 5-phospho-alpha-D-ribose 1-diphosphate: step 3/9.</text>
</comment>
<comment type="subunit">
    <text evidence="1">Homodimer.</text>
</comment>
<comment type="subcellular location">
    <subcellularLocation>
        <location evidence="1">Cytoplasm</location>
    </subcellularLocation>
</comment>
<comment type="similarity">
    <text evidence="1">Belongs to the PRA-CH family.</text>
</comment>
<gene>
    <name evidence="1" type="primary">hisI</name>
    <name type="ordered locus">Gura_3243</name>
</gene>
<protein>
    <recommendedName>
        <fullName evidence="1">Phosphoribosyl-AMP cyclohydrolase</fullName>
        <shortName evidence="1">PRA-CH</shortName>
        <ecNumber evidence="1">3.5.4.19</ecNumber>
    </recommendedName>
</protein>
<evidence type="ECO:0000255" key="1">
    <source>
        <dbReference type="HAMAP-Rule" id="MF_01021"/>
    </source>
</evidence>
<organism>
    <name type="scientific">Geotalea uraniireducens (strain Rf4)</name>
    <name type="common">Geobacter uraniireducens</name>
    <dbReference type="NCBI Taxonomy" id="351605"/>
    <lineage>
        <taxon>Bacteria</taxon>
        <taxon>Pseudomonadati</taxon>
        <taxon>Thermodesulfobacteriota</taxon>
        <taxon>Desulfuromonadia</taxon>
        <taxon>Geobacterales</taxon>
        <taxon>Geobacteraceae</taxon>
        <taxon>Geotalea</taxon>
    </lineage>
</organism>